<reference key="1">
    <citation type="submission" date="2007-03" db="EMBL/GenBank/DDBJ databases">
        <title>Complete sequence of Shewanella loihica PV-4.</title>
        <authorList>
            <consortium name="US DOE Joint Genome Institute"/>
            <person name="Copeland A."/>
            <person name="Lucas S."/>
            <person name="Lapidus A."/>
            <person name="Barry K."/>
            <person name="Detter J.C."/>
            <person name="Glavina del Rio T."/>
            <person name="Hammon N."/>
            <person name="Israni S."/>
            <person name="Dalin E."/>
            <person name="Tice H."/>
            <person name="Pitluck S."/>
            <person name="Chain P."/>
            <person name="Malfatti S."/>
            <person name="Shin M."/>
            <person name="Vergez L."/>
            <person name="Schmutz J."/>
            <person name="Larimer F."/>
            <person name="Land M."/>
            <person name="Hauser L."/>
            <person name="Kyrpides N."/>
            <person name="Mikhailova N."/>
            <person name="Romine M.F."/>
            <person name="Serres G."/>
            <person name="Fredrickson J."/>
            <person name="Tiedje J."/>
            <person name="Richardson P."/>
        </authorList>
    </citation>
    <scope>NUCLEOTIDE SEQUENCE [LARGE SCALE GENOMIC DNA]</scope>
    <source>
        <strain>ATCC BAA-1088 / PV-4</strain>
    </source>
</reference>
<sequence length="237" mass="25597">MRPSDRTPAQSRPVTITRQFTAHAEGSVLIEFGETKVLCTASFTEGVPRFLKGQGQGWVTAEYGMLPRSTHSRMDREAARGKQSGRTQEIQRLIGRALRAAVDMKALGENTIVIDCDVIQADGGTRTAAITGACVALVDALNWARGKGLIKTNPLKFLIAAVSVGIYKGEPICDLEYVEDSAAETDMNVVMTETGKIIEIQGTAEGEPFSHEELLSLLDLAKHGIREIVDVQKAALS</sequence>
<gene>
    <name evidence="1" type="primary">rph</name>
    <name type="ordered locus">Shew_3488</name>
</gene>
<organism>
    <name type="scientific">Shewanella loihica (strain ATCC BAA-1088 / PV-4)</name>
    <dbReference type="NCBI Taxonomy" id="323850"/>
    <lineage>
        <taxon>Bacteria</taxon>
        <taxon>Pseudomonadati</taxon>
        <taxon>Pseudomonadota</taxon>
        <taxon>Gammaproteobacteria</taxon>
        <taxon>Alteromonadales</taxon>
        <taxon>Shewanellaceae</taxon>
        <taxon>Shewanella</taxon>
    </lineage>
</organism>
<protein>
    <recommendedName>
        <fullName evidence="1">Ribonuclease PH</fullName>
        <shortName evidence="1">RNase PH</shortName>
        <ecNumber evidence="1">2.7.7.56</ecNumber>
    </recommendedName>
    <alternativeName>
        <fullName evidence="1">tRNA nucleotidyltransferase</fullName>
    </alternativeName>
</protein>
<proteinExistence type="inferred from homology"/>
<comment type="function">
    <text evidence="1">Phosphorolytic 3'-5' exoribonuclease that plays an important role in tRNA 3'-end maturation. Removes nucleotide residues following the 3'-CCA terminus of tRNAs; can also add nucleotides to the ends of RNA molecules by using nucleoside diphosphates as substrates, but this may not be physiologically important. Probably plays a role in initiation of 16S rRNA degradation (leading to ribosome degradation) during starvation.</text>
</comment>
<comment type="catalytic activity">
    <reaction evidence="1">
        <text>tRNA(n+1) + phosphate = tRNA(n) + a ribonucleoside 5'-diphosphate</text>
        <dbReference type="Rhea" id="RHEA:10628"/>
        <dbReference type="Rhea" id="RHEA-COMP:17343"/>
        <dbReference type="Rhea" id="RHEA-COMP:17344"/>
        <dbReference type="ChEBI" id="CHEBI:43474"/>
        <dbReference type="ChEBI" id="CHEBI:57930"/>
        <dbReference type="ChEBI" id="CHEBI:173114"/>
        <dbReference type="EC" id="2.7.7.56"/>
    </reaction>
</comment>
<comment type="subunit">
    <text evidence="1">Homohexameric ring arranged as a trimer of dimers.</text>
</comment>
<comment type="similarity">
    <text evidence="1">Belongs to the RNase PH family.</text>
</comment>
<name>RNPH_SHELP</name>
<accession>A3QIQ6</accession>
<evidence type="ECO:0000255" key="1">
    <source>
        <dbReference type="HAMAP-Rule" id="MF_00564"/>
    </source>
</evidence>
<feature type="chain" id="PRO_1000024883" description="Ribonuclease PH">
    <location>
        <begin position="1"/>
        <end position="237"/>
    </location>
</feature>
<feature type="binding site" evidence="1">
    <location>
        <position position="86"/>
    </location>
    <ligand>
        <name>phosphate</name>
        <dbReference type="ChEBI" id="CHEBI:43474"/>
        <note>substrate</note>
    </ligand>
</feature>
<feature type="binding site" evidence="1">
    <location>
        <begin position="124"/>
        <end position="126"/>
    </location>
    <ligand>
        <name>phosphate</name>
        <dbReference type="ChEBI" id="CHEBI:43474"/>
        <note>substrate</note>
    </ligand>
</feature>
<dbReference type="EC" id="2.7.7.56" evidence="1"/>
<dbReference type="EMBL" id="CP000606">
    <property type="protein sequence ID" value="ABO25354.1"/>
    <property type="molecule type" value="Genomic_DNA"/>
</dbReference>
<dbReference type="RefSeq" id="WP_011867283.1">
    <property type="nucleotide sequence ID" value="NC_009092.1"/>
</dbReference>
<dbReference type="SMR" id="A3QIQ6"/>
<dbReference type="STRING" id="323850.Shew_3488"/>
<dbReference type="KEGG" id="slo:Shew_3488"/>
<dbReference type="eggNOG" id="COG0689">
    <property type="taxonomic scope" value="Bacteria"/>
</dbReference>
<dbReference type="HOGENOM" id="CLU_050858_0_0_6"/>
<dbReference type="OrthoDB" id="9802265at2"/>
<dbReference type="Proteomes" id="UP000001558">
    <property type="component" value="Chromosome"/>
</dbReference>
<dbReference type="GO" id="GO:0000175">
    <property type="term" value="F:3'-5'-RNA exonuclease activity"/>
    <property type="evidence" value="ECO:0007669"/>
    <property type="project" value="UniProtKB-UniRule"/>
</dbReference>
<dbReference type="GO" id="GO:0000049">
    <property type="term" value="F:tRNA binding"/>
    <property type="evidence" value="ECO:0007669"/>
    <property type="project" value="UniProtKB-UniRule"/>
</dbReference>
<dbReference type="GO" id="GO:0009022">
    <property type="term" value="F:tRNA nucleotidyltransferase activity"/>
    <property type="evidence" value="ECO:0007669"/>
    <property type="project" value="UniProtKB-UniRule"/>
</dbReference>
<dbReference type="GO" id="GO:0016075">
    <property type="term" value="P:rRNA catabolic process"/>
    <property type="evidence" value="ECO:0007669"/>
    <property type="project" value="UniProtKB-UniRule"/>
</dbReference>
<dbReference type="GO" id="GO:0006364">
    <property type="term" value="P:rRNA processing"/>
    <property type="evidence" value="ECO:0007669"/>
    <property type="project" value="UniProtKB-KW"/>
</dbReference>
<dbReference type="GO" id="GO:0008033">
    <property type="term" value="P:tRNA processing"/>
    <property type="evidence" value="ECO:0007669"/>
    <property type="project" value="UniProtKB-UniRule"/>
</dbReference>
<dbReference type="CDD" id="cd11362">
    <property type="entry name" value="RNase_PH_bact"/>
    <property type="match status" value="1"/>
</dbReference>
<dbReference type="FunFam" id="3.30.230.70:FF:000003">
    <property type="entry name" value="Ribonuclease PH"/>
    <property type="match status" value="1"/>
</dbReference>
<dbReference type="Gene3D" id="3.30.230.70">
    <property type="entry name" value="GHMP Kinase, N-terminal domain"/>
    <property type="match status" value="1"/>
</dbReference>
<dbReference type="HAMAP" id="MF_00564">
    <property type="entry name" value="RNase_PH"/>
    <property type="match status" value="1"/>
</dbReference>
<dbReference type="InterPro" id="IPR001247">
    <property type="entry name" value="ExoRNase_PH_dom1"/>
</dbReference>
<dbReference type="InterPro" id="IPR015847">
    <property type="entry name" value="ExoRNase_PH_dom2"/>
</dbReference>
<dbReference type="InterPro" id="IPR036345">
    <property type="entry name" value="ExoRNase_PH_dom2_sf"/>
</dbReference>
<dbReference type="InterPro" id="IPR027408">
    <property type="entry name" value="PNPase/RNase_PH_dom_sf"/>
</dbReference>
<dbReference type="InterPro" id="IPR020568">
    <property type="entry name" value="Ribosomal_Su5_D2-typ_SF"/>
</dbReference>
<dbReference type="InterPro" id="IPR050080">
    <property type="entry name" value="RNase_PH"/>
</dbReference>
<dbReference type="InterPro" id="IPR002381">
    <property type="entry name" value="RNase_PH_bac-type"/>
</dbReference>
<dbReference type="InterPro" id="IPR018336">
    <property type="entry name" value="RNase_PH_CS"/>
</dbReference>
<dbReference type="NCBIfam" id="TIGR01966">
    <property type="entry name" value="RNasePH"/>
    <property type="match status" value="1"/>
</dbReference>
<dbReference type="PANTHER" id="PTHR11953">
    <property type="entry name" value="EXOSOME COMPLEX COMPONENT"/>
    <property type="match status" value="1"/>
</dbReference>
<dbReference type="PANTHER" id="PTHR11953:SF0">
    <property type="entry name" value="EXOSOME COMPLEX COMPONENT RRP41"/>
    <property type="match status" value="1"/>
</dbReference>
<dbReference type="Pfam" id="PF01138">
    <property type="entry name" value="RNase_PH"/>
    <property type="match status" value="1"/>
</dbReference>
<dbReference type="Pfam" id="PF03725">
    <property type="entry name" value="RNase_PH_C"/>
    <property type="match status" value="1"/>
</dbReference>
<dbReference type="SUPFAM" id="SSF55666">
    <property type="entry name" value="Ribonuclease PH domain 2-like"/>
    <property type="match status" value="1"/>
</dbReference>
<dbReference type="SUPFAM" id="SSF54211">
    <property type="entry name" value="Ribosomal protein S5 domain 2-like"/>
    <property type="match status" value="1"/>
</dbReference>
<dbReference type="PROSITE" id="PS01277">
    <property type="entry name" value="RIBONUCLEASE_PH"/>
    <property type="match status" value="1"/>
</dbReference>
<keyword id="KW-0548">Nucleotidyltransferase</keyword>
<keyword id="KW-1185">Reference proteome</keyword>
<keyword id="KW-0694">RNA-binding</keyword>
<keyword id="KW-0698">rRNA processing</keyword>
<keyword id="KW-0808">Transferase</keyword>
<keyword id="KW-0819">tRNA processing</keyword>
<keyword id="KW-0820">tRNA-binding</keyword>